<gene>
    <name evidence="1" type="primary">pyrB</name>
    <name type="ordered locus">PFLU_5758</name>
</gene>
<protein>
    <recommendedName>
        <fullName evidence="1">Aspartate carbamoyltransferase catalytic subunit</fullName>
        <ecNumber evidence="1">2.1.3.2</ecNumber>
    </recommendedName>
    <alternativeName>
        <fullName evidence="1">Aspartate transcarbamylase</fullName>
        <shortName evidence="1">ATCase</shortName>
    </alternativeName>
</protein>
<dbReference type="EC" id="2.1.3.2" evidence="1"/>
<dbReference type="EMBL" id="AM181176">
    <property type="protein sequence ID" value="CAY53133.1"/>
    <property type="molecule type" value="Genomic_DNA"/>
</dbReference>
<dbReference type="RefSeq" id="WP_015886339.1">
    <property type="nucleotide sequence ID" value="NC_012660.1"/>
</dbReference>
<dbReference type="SMR" id="C3K3K2"/>
<dbReference type="STRING" id="294.SRM1_05407"/>
<dbReference type="eggNOG" id="COG0540">
    <property type="taxonomic scope" value="Bacteria"/>
</dbReference>
<dbReference type="HOGENOM" id="CLU_043846_2_0_6"/>
<dbReference type="OrthoDB" id="9774690at2"/>
<dbReference type="UniPathway" id="UPA00070">
    <property type="reaction ID" value="UER00116"/>
</dbReference>
<dbReference type="GO" id="GO:0005829">
    <property type="term" value="C:cytosol"/>
    <property type="evidence" value="ECO:0007669"/>
    <property type="project" value="TreeGrafter"/>
</dbReference>
<dbReference type="GO" id="GO:0016597">
    <property type="term" value="F:amino acid binding"/>
    <property type="evidence" value="ECO:0007669"/>
    <property type="project" value="InterPro"/>
</dbReference>
<dbReference type="GO" id="GO:0004070">
    <property type="term" value="F:aspartate carbamoyltransferase activity"/>
    <property type="evidence" value="ECO:0007669"/>
    <property type="project" value="UniProtKB-UniRule"/>
</dbReference>
<dbReference type="GO" id="GO:0006207">
    <property type="term" value="P:'de novo' pyrimidine nucleobase biosynthetic process"/>
    <property type="evidence" value="ECO:0007669"/>
    <property type="project" value="InterPro"/>
</dbReference>
<dbReference type="GO" id="GO:0044205">
    <property type="term" value="P:'de novo' UMP biosynthetic process"/>
    <property type="evidence" value="ECO:0007669"/>
    <property type="project" value="UniProtKB-UniRule"/>
</dbReference>
<dbReference type="GO" id="GO:0006520">
    <property type="term" value="P:amino acid metabolic process"/>
    <property type="evidence" value="ECO:0007669"/>
    <property type="project" value="InterPro"/>
</dbReference>
<dbReference type="FunFam" id="3.40.50.1370:FF:000006">
    <property type="entry name" value="Aspartate carbamoyltransferase"/>
    <property type="match status" value="1"/>
</dbReference>
<dbReference type="FunFam" id="3.40.50.1370:FF:000007">
    <property type="entry name" value="Aspartate carbamoyltransferase"/>
    <property type="match status" value="1"/>
</dbReference>
<dbReference type="Gene3D" id="3.40.50.1370">
    <property type="entry name" value="Aspartate/ornithine carbamoyltransferase"/>
    <property type="match status" value="2"/>
</dbReference>
<dbReference type="HAMAP" id="MF_00001">
    <property type="entry name" value="Asp_carb_tr"/>
    <property type="match status" value="1"/>
</dbReference>
<dbReference type="InterPro" id="IPR006132">
    <property type="entry name" value="Asp/Orn_carbamoyltranf_P-bd"/>
</dbReference>
<dbReference type="InterPro" id="IPR006130">
    <property type="entry name" value="Asp/Orn_carbamoylTrfase"/>
</dbReference>
<dbReference type="InterPro" id="IPR036901">
    <property type="entry name" value="Asp/Orn_carbamoylTrfase_sf"/>
</dbReference>
<dbReference type="InterPro" id="IPR002082">
    <property type="entry name" value="Asp_carbamoyltransf"/>
</dbReference>
<dbReference type="InterPro" id="IPR006131">
    <property type="entry name" value="Asp_carbamoyltransf_Asp/Orn-bd"/>
</dbReference>
<dbReference type="NCBIfam" id="TIGR00670">
    <property type="entry name" value="asp_carb_tr"/>
    <property type="match status" value="1"/>
</dbReference>
<dbReference type="NCBIfam" id="NF002032">
    <property type="entry name" value="PRK00856.1"/>
    <property type="match status" value="1"/>
</dbReference>
<dbReference type="PANTHER" id="PTHR45753:SF6">
    <property type="entry name" value="ASPARTATE CARBAMOYLTRANSFERASE"/>
    <property type="match status" value="1"/>
</dbReference>
<dbReference type="PANTHER" id="PTHR45753">
    <property type="entry name" value="ORNITHINE CARBAMOYLTRANSFERASE, MITOCHONDRIAL"/>
    <property type="match status" value="1"/>
</dbReference>
<dbReference type="Pfam" id="PF00185">
    <property type="entry name" value="OTCace"/>
    <property type="match status" value="1"/>
</dbReference>
<dbReference type="Pfam" id="PF02729">
    <property type="entry name" value="OTCace_N"/>
    <property type="match status" value="1"/>
</dbReference>
<dbReference type="PRINTS" id="PR00100">
    <property type="entry name" value="AOTCASE"/>
</dbReference>
<dbReference type="PRINTS" id="PR00101">
    <property type="entry name" value="ATCASE"/>
</dbReference>
<dbReference type="SUPFAM" id="SSF53671">
    <property type="entry name" value="Aspartate/ornithine carbamoyltransferase"/>
    <property type="match status" value="1"/>
</dbReference>
<dbReference type="PROSITE" id="PS00097">
    <property type="entry name" value="CARBAMOYLTRANSFERASE"/>
    <property type="match status" value="1"/>
</dbReference>
<accession>C3K3K2</accession>
<evidence type="ECO:0000255" key="1">
    <source>
        <dbReference type="HAMAP-Rule" id="MF_00001"/>
    </source>
</evidence>
<comment type="function">
    <text evidence="1">Catalyzes the condensation of carbamoyl phosphate and aspartate to form carbamoyl aspartate and inorganic phosphate, the committed step in the de novo pyrimidine nucleotide biosynthesis pathway.</text>
</comment>
<comment type="catalytic activity">
    <reaction evidence="1">
        <text>carbamoyl phosphate + L-aspartate = N-carbamoyl-L-aspartate + phosphate + H(+)</text>
        <dbReference type="Rhea" id="RHEA:20013"/>
        <dbReference type="ChEBI" id="CHEBI:15378"/>
        <dbReference type="ChEBI" id="CHEBI:29991"/>
        <dbReference type="ChEBI" id="CHEBI:32814"/>
        <dbReference type="ChEBI" id="CHEBI:43474"/>
        <dbReference type="ChEBI" id="CHEBI:58228"/>
        <dbReference type="EC" id="2.1.3.2"/>
    </reaction>
</comment>
<comment type="pathway">
    <text evidence="1">Pyrimidine metabolism; UMP biosynthesis via de novo pathway; (S)-dihydroorotate from bicarbonate: step 2/3.</text>
</comment>
<comment type="subunit">
    <text evidence="1">Heterododecamer (2C3:3R2) of six catalytic PyrB chains organized as two trimers (C3), and six regulatory PyrI chains organized as three dimers (R2).</text>
</comment>
<comment type="similarity">
    <text evidence="1">Belongs to the aspartate/ornithine carbamoyltransferase superfamily. ATCase family.</text>
</comment>
<sequence length="334" mass="36294">MTPLDAKRPLQLNAQGQLQHFLSLDGLPRELLTEILDTADSFLEVGGRAVKKVPLLRGKTICNVFFENSTRTRTTFELAAQRLSADVITLNVSTSSASKGETLLDTLRNLEAMAADMFVVRHGDSGAAHFIAEHVCPQVAIINGGDGRHAHPTQGMLDMLTIRRHKGSFENLSVAIVGDILHSRVARSNMLALKTLGCPDIRVIAPKTLLPIGIEQYGVKVYTDMAEGLKDVDVVIMLRLQRERMSGGLLPSEGEFYRLFGLTTARLAGAKPDAIVMHPGPINRGVEIESAVADGNQSVILNQVTYGIAVRMAVLSMAMSGQTAQRQFEQENAQ</sequence>
<feature type="chain" id="PRO_1000201598" description="Aspartate carbamoyltransferase catalytic subunit">
    <location>
        <begin position="1"/>
        <end position="334"/>
    </location>
</feature>
<feature type="binding site" evidence="1">
    <location>
        <position position="71"/>
    </location>
    <ligand>
        <name>carbamoyl phosphate</name>
        <dbReference type="ChEBI" id="CHEBI:58228"/>
    </ligand>
</feature>
<feature type="binding site" evidence="1">
    <location>
        <position position="72"/>
    </location>
    <ligand>
        <name>carbamoyl phosphate</name>
        <dbReference type="ChEBI" id="CHEBI:58228"/>
    </ligand>
</feature>
<feature type="binding site" evidence="1">
    <location>
        <position position="99"/>
    </location>
    <ligand>
        <name>L-aspartate</name>
        <dbReference type="ChEBI" id="CHEBI:29991"/>
    </ligand>
</feature>
<feature type="binding site" evidence="1">
    <location>
        <position position="121"/>
    </location>
    <ligand>
        <name>carbamoyl phosphate</name>
        <dbReference type="ChEBI" id="CHEBI:58228"/>
    </ligand>
</feature>
<feature type="binding site" evidence="1">
    <location>
        <position position="151"/>
    </location>
    <ligand>
        <name>carbamoyl phosphate</name>
        <dbReference type="ChEBI" id="CHEBI:58228"/>
    </ligand>
</feature>
<feature type="binding site" evidence="1">
    <location>
        <position position="154"/>
    </location>
    <ligand>
        <name>carbamoyl phosphate</name>
        <dbReference type="ChEBI" id="CHEBI:58228"/>
    </ligand>
</feature>
<feature type="binding site" evidence="1">
    <location>
        <position position="184"/>
    </location>
    <ligand>
        <name>L-aspartate</name>
        <dbReference type="ChEBI" id="CHEBI:29991"/>
    </ligand>
</feature>
<feature type="binding site" evidence="1">
    <location>
        <position position="239"/>
    </location>
    <ligand>
        <name>L-aspartate</name>
        <dbReference type="ChEBI" id="CHEBI:29991"/>
    </ligand>
</feature>
<feature type="binding site" evidence="1">
    <location>
        <position position="280"/>
    </location>
    <ligand>
        <name>carbamoyl phosphate</name>
        <dbReference type="ChEBI" id="CHEBI:58228"/>
    </ligand>
</feature>
<feature type="binding site" evidence="1">
    <location>
        <position position="281"/>
    </location>
    <ligand>
        <name>carbamoyl phosphate</name>
        <dbReference type="ChEBI" id="CHEBI:58228"/>
    </ligand>
</feature>
<name>PYRB_PSEFS</name>
<keyword id="KW-0665">Pyrimidine biosynthesis</keyword>
<keyword id="KW-0808">Transferase</keyword>
<proteinExistence type="inferred from homology"/>
<organism>
    <name type="scientific">Pseudomonas fluorescens (strain SBW25)</name>
    <dbReference type="NCBI Taxonomy" id="216595"/>
    <lineage>
        <taxon>Bacteria</taxon>
        <taxon>Pseudomonadati</taxon>
        <taxon>Pseudomonadota</taxon>
        <taxon>Gammaproteobacteria</taxon>
        <taxon>Pseudomonadales</taxon>
        <taxon>Pseudomonadaceae</taxon>
        <taxon>Pseudomonas</taxon>
    </lineage>
</organism>
<reference key="1">
    <citation type="journal article" date="2009" name="Genome Biol.">
        <title>Genomic and genetic analyses of diversity and plant interactions of Pseudomonas fluorescens.</title>
        <authorList>
            <person name="Silby M.W."/>
            <person name="Cerdeno-Tarraga A.M."/>
            <person name="Vernikos G.S."/>
            <person name="Giddens S.R."/>
            <person name="Jackson R.W."/>
            <person name="Preston G.M."/>
            <person name="Zhang X.-X."/>
            <person name="Moon C.D."/>
            <person name="Gehrig S.M."/>
            <person name="Godfrey S.A.C."/>
            <person name="Knight C.G."/>
            <person name="Malone J.G."/>
            <person name="Robinson Z."/>
            <person name="Spiers A.J."/>
            <person name="Harris S."/>
            <person name="Challis G.L."/>
            <person name="Yaxley A.M."/>
            <person name="Harris D."/>
            <person name="Seeger K."/>
            <person name="Murphy L."/>
            <person name="Rutter S."/>
            <person name="Squares R."/>
            <person name="Quail M.A."/>
            <person name="Saunders E."/>
            <person name="Mavromatis K."/>
            <person name="Brettin T.S."/>
            <person name="Bentley S.D."/>
            <person name="Hothersall J."/>
            <person name="Stephens E."/>
            <person name="Thomas C.M."/>
            <person name="Parkhill J."/>
            <person name="Levy S.B."/>
            <person name="Rainey P.B."/>
            <person name="Thomson N.R."/>
        </authorList>
    </citation>
    <scope>NUCLEOTIDE SEQUENCE [LARGE SCALE GENOMIC DNA]</scope>
    <source>
        <strain>SBW25</strain>
    </source>
</reference>